<comment type="function">
    <text evidence="1">May help in the organization of the PsaL subunit.</text>
</comment>
<comment type="subcellular location">
    <subcellularLocation>
        <location evidence="1">Plastid</location>
        <location evidence="1">Chloroplast thylakoid membrane</location>
        <topology evidence="1">Single-pass membrane protein</topology>
    </subcellularLocation>
</comment>
<comment type="similarity">
    <text evidence="1">Belongs to the PsaI family.</text>
</comment>
<keyword id="KW-0150">Chloroplast</keyword>
<keyword id="KW-0472">Membrane</keyword>
<keyword id="KW-0602">Photosynthesis</keyword>
<keyword id="KW-0603">Photosystem I</keyword>
<keyword id="KW-0934">Plastid</keyword>
<keyword id="KW-0793">Thylakoid</keyword>
<keyword id="KW-0812">Transmembrane</keyword>
<keyword id="KW-1133">Transmembrane helix</keyword>
<proteinExistence type="inferred from homology"/>
<organism>
    <name type="scientific">Nicotiana tomentosiformis</name>
    <name type="common">Tobacco</name>
    <dbReference type="NCBI Taxonomy" id="4098"/>
    <lineage>
        <taxon>Eukaryota</taxon>
        <taxon>Viridiplantae</taxon>
        <taxon>Streptophyta</taxon>
        <taxon>Embryophyta</taxon>
        <taxon>Tracheophyta</taxon>
        <taxon>Spermatophyta</taxon>
        <taxon>Magnoliopsida</taxon>
        <taxon>eudicotyledons</taxon>
        <taxon>Gunneridae</taxon>
        <taxon>Pentapetalae</taxon>
        <taxon>asterids</taxon>
        <taxon>lamiids</taxon>
        <taxon>Solanales</taxon>
        <taxon>Solanaceae</taxon>
        <taxon>Nicotianoideae</taxon>
        <taxon>Nicotianeae</taxon>
        <taxon>Nicotiana</taxon>
    </lineage>
</organism>
<name>PSAI_NICTO</name>
<dbReference type="EMBL" id="AB240139">
    <property type="protein sequence ID" value="BAE48012.1"/>
    <property type="molecule type" value="Genomic_DNA"/>
</dbReference>
<dbReference type="RefSeq" id="YP_398874.1">
    <property type="nucleotide sequence ID" value="NC_007602.1"/>
</dbReference>
<dbReference type="SMR" id="Q33C23"/>
<dbReference type="GeneID" id="3776365"/>
<dbReference type="KEGG" id="nto:3776365"/>
<dbReference type="OrthoDB" id="970998at2759"/>
<dbReference type="GO" id="GO:0009535">
    <property type="term" value="C:chloroplast thylakoid membrane"/>
    <property type="evidence" value="ECO:0007669"/>
    <property type="project" value="UniProtKB-SubCell"/>
</dbReference>
<dbReference type="GO" id="GO:0009522">
    <property type="term" value="C:photosystem I"/>
    <property type="evidence" value="ECO:0007669"/>
    <property type="project" value="UniProtKB-KW"/>
</dbReference>
<dbReference type="GO" id="GO:0015979">
    <property type="term" value="P:photosynthesis"/>
    <property type="evidence" value="ECO:0007669"/>
    <property type="project" value="UniProtKB-UniRule"/>
</dbReference>
<dbReference type="HAMAP" id="MF_00431">
    <property type="entry name" value="PSI_PsaI"/>
    <property type="match status" value="1"/>
</dbReference>
<dbReference type="InterPro" id="IPR001302">
    <property type="entry name" value="PSI_PsaI"/>
</dbReference>
<dbReference type="InterPro" id="IPR036357">
    <property type="entry name" value="PSI_PsaI_sf"/>
</dbReference>
<dbReference type="NCBIfam" id="TIGR03052">
    <property type="entry name" value="PS_I_psaI"/>
    <property type="match status" value="1"/>
</dbReference>
<dbReference type="PANTHER" id="PTHR35775">
    <property type="match status" value="1"/>
</dbReference>
<dbReference type="PANTHER" id="PTHR35775:SF2">
    <property type="entry name" value="PHOTOSYSTEM I REACTION CENTER SUBUNIT VIII"/>
    <property type="match status" value="1"/>
</dbReference>
<dbReference type="Pfam" id="PF00796">
    <property type="entry name" value="PSI_8"/>
    <property type="match status" value="1"/>
</dbReference>
<dbReference type="SUPFAM" id="SSF81540">
    <property type="entry name" value="Subunit VIII of photosystem I reaction centre, PsaI"/>
    <property type="match status" value="1"/>
</dbReference>
<protein>
    <recommendedName>
        <fullName evidence="1">Photosystem I reaction center subunit VIII</fullName>
        <shortName evidence="1">PSI-I</shortName>
    </recommendedName>
</protein>
<accession>Q33C23</accession>
<evidence type="ECO:0000255" key="1">
    <source>
        <dbReference type="HAMAP-Rule" id="MF_00431"/>
    </source>
</evidence>
<gene>
    <name evidence="1" type="primary">psaI</name>
</gene>
<reference key="1">
    <citation type="journal article" date="2006" name="Mol. Genet. Genomics">
        <title>The chloroplast genome of Nicotiana sylvestris and Nicotiana tomentosiformis: complete sequencing confirms that the Nicotiana sylvestris progenitor is the maternal genome donor of Nicotiana tabacum.</title>
        <authorList>
            <person name="Yukawa M."/>
            <person name="Tsudzuki T."/>
            <person name="Sugiura M."/>
        </authorList>
    </citation>
    <scope>NUCLEOTIDE SEQUENCE [LARGE SCALE GENOMIC DNA]</scope>
</reference>
<sequence>MTNLNLPSIFVPLVGLVFPAIAMASLFLHVQKNKIV</sequence>
<feature type="chain" id="PRO_0000276029" description="Photosystem I reaction center subunit VIII">
    <location>
        <begin position="1"/>
        <end position="36"/>
    </location>
</feature>
<feature type="transmembrane region" description="Helical" evidence="1">
    <location>
        <begin position="8"/>
        <end position="28"/>
    </location>
</feature>
<geneLocation type="chloroplast"/>